<keyword id="KW-1003">Cell membrane</keyword>
<keyword id="KW-1015">Disulfide bond</keyword>
<keyword id="KW-0245">EGF-like domain</keyword>
<keyword id="KW-0325">Glycoprotein</keyword>
<keyword id="KW-0336">GPI-anchor</keyword>
<keyword id="KW-0449">Lipoprotein</keyword>
<keyword id="KW-0461">Malaria</keyword>
<keyword id="KW-0472">Membrane</keyword>
<keyword id="KW-0677">Repeat</keyword>
<keyword id="KW-0732">Signal</keyword>
<dbReference type="EMBL" id="X68402">
    <property type="protein sequence ID" value="CAA48468.1"/>
    <property type="molecule type" value="mRNA"/>
</dbReference>
<dbReference type="EMBL" id="S67121">
    <property type="protein sequence ID" value="AAB28814.1"/>
    <property type="molecule type" value="mRNA"/>
</dbReference>
<dbReference type="PIR" id="S25647">
    <property type="entry name" value="S25647"/>
</dbReference>
<dbReference type="RefSeq" id="XP_034420390.1">
    <property type="nucleotide sequence ID" value="XM_034568396.1"/>
</dbReference>
<dbReference type="RefSeq" id="XP_675906.1">
    <property type="nucleotide sequence ID" value="XM_670814.1"/>
</dbReference>
<dbReference type="SMR" id="Q04620"/>
<dbReference type="ABCD" id="Q04620">
    <property type="antibodies" value="1 sequenced antibody"/>
</dbReference>
<dbReference type="GeneID" id="55148453"/>
<dbReference type="VEuPathDB" id="PlasmoDB:PBANKA_0514900"/>
<dbReference type="eggNOG" id="ENOG502QXSU">
    <property type="taxonomic scope" value="Eukaryota"/>
</dbReference>
<dbReference type="HOGENOM" id="CLU_1296629_0_0_1"/>
<dbReference type="OMA" id="DYAVCTN"/>
<dbReference type="GO" id="GO:0009986">
    <property type="term" value="C:cell surface"/>
    <property type="evidence" value="ECO:0007669"/>
    <property type="project" value="InterPro"/>
</dbReference>
<dbReference type="GO" id="GO:0005886">
    <property type="term" value="C:plasma membrane"/>
    <property type="evidence" value="ECO:0007669"/>
    <property type="project" value="UniProtKB-SubCell"/>
</dbReference>
<dbReference type="GO" id="GO:0098552">
    <property type="term" value="C:side of membrane"/>
    <property type="evidence" value="ECO:0007669"/>
    <property type="project" value="UniProtKB-KW"/>
</dbReference>
<dbReference type="Gene3D" id="2.90.20.10">
    <property type="entry name" value="Plasmodium vivax P25 domain"/>
    <property type="match status" value="1"/>
</dbReference>
<dbReference type="InterPro" id="IPR000742">
    <property type="entry name" value="EGF-like_dom"/>
</dbReference>
<dbReference type="InterPro" id="IPR010423">
    <property type="entry name" value="Pvs25/Psv28_EGF"/>
</dbReference>
<dbReference type="Pfam" id="PF06247">
    <property type="entry name" value="Plasmod_Pvs28"/>
    <property type="match status" value="4"/>
</dbReference>
<dbReference type="SMART" id="SM00181">
    <property type="entry name" value="EGF"/>
    <property type="match status" value="3"/>
</dbReference>
<dbReference type="PROSITE" id="PS01186">
    <property type="entry name" value="EGF_2"/>
    <property type="match status" value="2"/>
</dbReference>
<reference key="1">
    <citation type="journal article" date="1993" name="Mol. Biochem. Parasitol.">
        <title>Structure and expression of a post-transcriptionally regulated malaria gene encoding a surface protein from the sexual stages of Plasmodium berghei.</title>
        <authorList>
            <person name="Paton M.J."/>
            <person name="Barker G.C."/>
            <person name="Matsuoka H."/>
            <person name="Ramesar J."/>
            <person name="Janse C.J."/>
            <person name="Waters A.P."/>
            <person name="Sinden R.E."/>
        </authorList>
    </citation>
    <scope>NUCLEOTIDE SEQUENCE [MRNA]</scope>
</reference>
<reference key="2">
    <citation type="journal article" date="1993" name="Parassitologia">
        <title>Factors regulating natural transmission of Plasmodium berghei to the mosquito vector, and the cloning of a transmission-blocking immunogen.</title>
        <authorList>
            <person name="Sinden R.E."/>
            <person name="Barker G.C."/>
            <person name="Paton M.J."/>
            <person name="Fleck S.L."/>
            <person name="Butcher G.A."/>
            <person name="Waters A."/>
            <person name="Janse C.J."/>
            <person name="Rodriguez M.H."/>
        </authorList>
    </citation>
    <scope>NUCLEOTIDE SEQUENCE [MRNA]</scope>
</reference>
<name>OS24_PLABA</name>
<accession>Q04620</accession>
<proteinExistence type="evidence at transcript level"/>
<sequence>MNFKYSFIFLFFIQLAIRYNNAKITVDTICKGGKLIQMSNHYECKCPSGYALKTENTCEPIVKCDKLENINKVCGEYSICINQGNFGLEKAFVCMCTNGYMLSQNICKPTRCYNYECNAGKCILDSINPNNPVCSCDIGKILQNGKCTGTGETKCLLKCKAAEECKLTGKHYECVSKPQAPGTGSETPSNSSFMNGMSIISIIALLVIYVIVM</sequence>
<comment type="subcellular location">
    <subcellularLocation>
        <location evidence="3">Cell membrane</location>
        <topology evidence="3">Lipid-anchor</topology>
        <topology evidence="3">GPI-anchor</topology>
    </subcellularLocation>
</comment>
<comment type="developmental stage">
    <text>Expressed during gametogenesis. It first appears on the macrogamete and zygote 1-2 hours after fertilization, reaching a maximum 10 hours later on the young ookinete and persisting during early oocyst development.</text>
</comment>
<feature type="signal peptide" evidence="2">
    <location>
        <begin position="1"/>
        <end position="28"/>
    </location>
</feature>
<feature type="chain" id="PRO_0000024565" description="24 kDa ookinete surface protein">
    <location>
        <begin position="29"/>
        <end position="190"/>
    </location>
</feature>
<feature type="propeptide" id="PRO_0000024566" description="Removed in mature form" evidence="2">
    <location>
        <begin position="191"/>
        <end position="213"/>
    </location>
</feature>
<feature type="domain" description="EGF-like 1; truncated">
    <location>
        <begin position="30"/>
        <end position="59"/>
    </location>
</feature>
<feature type="domain" description="EGF-like 2">
    <location>
        <begin position="60"/>
        <end position="108"/>
    </location>
</feature>
<feature type="domain" description="EGF-like 3">
    <location>
        <begin position="108"/>
        <end position="148"/>
    </location>
</feature>
<feature type="domain" description="EGF-like 4; truncated">
    <location>
        <begin position="151"/>
        <end position="175"/>
    </location>
</feature>
<feature type="lipid moiety-binding region" description="GPI-anchor amidated asparagine" evidence="2">
    <location>
        <position position="190"/>
    </location>
</feature>
<feature type="glycosylation site" description="N-linked (GlcNAc...) asparagine" evidence="2">
    <location>
        <position position="190"/>
    </location>
</feature>
<feature type="disulfide bond" evidence="1">
    <location>
        <begin position="64"/>
        <end position="80"/>
    </location>
</feature>
<feature type="disulfide bond" evidence="1">
    <location>
        <begin position="74"/>
        <end position="94"/>
    </location>
</feature>
<feature type="disulfide bond" evidence="1">
    <location>
        <begin position="96"/>
        <end position="107"/>
    </location>
</feature>
<feature type="disulfide bond" evidence="1">
    <location>
        <begin position="112"/>
        <end position="122"/>
    </location>
</feature>
<feature type="disulfide bond" evidence="1">
    <location>
        <begin position="117"/>
        <end position="134"/>
    </location>
</feature>
<feature type="disulfide bond" evidence="1">
    <location>
        <begin position="136"/>
        <end position="147"/>
    </location>
</feature>
<protein>
    <recommendedName>
        <fullName>24 kDa ookinete surface protein</fullName>
    </recommendedName>
    <alternativeName>
        <fullName>Pbs21</fullName>
    </alternativeName>
</protein>
<evidence type="ECO:0000250" key="1"/>
<evidence type="ECO:0000255" key="2"/>
<evidence type="ECO:0000305" key="3"/>
<organism>
    <name type="scientific">Plasmodium berghei (strain Anka)</name>
    <dbReference type="NCBI Taxonomy" id="5823"/>
    <lineage>
        <taxon>Eukaryota</taxon>
        <taxon>Sar</taxon>
        <taxon>Alveolata</taxon>
        <taxon>Apicomplexa</taxon>
        <taxon>Aconoidasida</taxon>
        <taxon>Haemosporida</taxon>
        <taxon>Plasmodiidae</taxon>
        <taxon>Plasmodium</taxon>
        <taxon>Plasmodium (Vinckeia)</taxon>
    </lineage>
</organism>